<organism>
    <name type="scientific">Geobacillus thermodenitrificans (strain NG80-2)</name>
    <dbReference type="NCBI Taxonomy" id="420246"/>
    <lineage>
        <taxon>Bacteria</taxon>
        <taxon>Bacillati</taxon>
        <taxon>Bacillota</taxon>
        <taxon>Bacilli</taxon>
        <taxon>Bacillales</taxon>
        <taxon>Anoxybacillaceae</taxon>
        <taxon>Geobacillus</taxon>
    </lineage>
</organism>
<protein>
    <recommendedName>
        <fullName evidence="1">ATP phosphoribosyltransferase regulatory subunit</fullName>
    </recommendedName>
</protein>
<proteinExistence type="inferred from homology"/>
<evidence type="ECO:0000255" key="1">
    <source>
        <dbReference type="HAMAP-Rule" id="MF_00125"/>
    </source>
</evidence>
<name>HISZ_GEOTN</name>
<sequence length="394" mass="44017">MAKRLFMFEKPLGMRDTLPFLYEMKKQVRRTMAEEIERWGYEFIETPTLEYYETVGTASAIADHRLFKLLDQQGHTLVLRPDMTAPIARVAASRLYEDSNPLRLAYNANVFRAQQREGGRPAEFEQIGVELIGDGTVMADAEVISLMAALLKRVGLSHFSVAVGHIGYVNALFLEILGNEERASVLRRFLYEKNYVGYREHVKSLPLSSIDQKRLLDLLSLRGGSEAIEAAKALVTSEEGQRAADELAALLAALKTYGVSEAVKLDMALVSHMSYYTGILFEVYAEQVGFPIGNGGRYDDLLAKFSRPAPATGFGLRVDRLIEAIGETDVRGEIECIVFSQERLAEAVELAEAKRAEGQRVVLQHITGIRDIDAYSQRYRSIVYLLGRSGHDGQ</sequence>
<dbReference type="EMBL" id="CP000557">
    <property type="protein sequence ID" value="ABO68372.1"/>
    <property type="molecule type" value="Genomic_DNA"/>
</dbReference>
<dbReference type="RefSeq" id="WP_011888178.1">
    <property type="nucleotide sequence ID" value="NC_009328.1"/>
</dbReference>
<dbReference type="SMR" id="A4ISR8"/>
<dbReference type="GeneID" id="87622824"/>
<dbReference type="KEGG" id="gtn:GTNG_3027"/>
<dbReference type="eggNOG" id="COG3705">
    <property type="taxonomic scope" value="Bacteria"/>
</dbReference>
<dbReference type="HOGENOM" id="CLU_025113_0_0_9"/>
<dbReference type="UniPathway" id="UPA00031">
    <property type="reaction ID" value="UER00006"/>
</dbReference>
<dbReference type="Proteomes" id="UP000001578">
    <property type="component" value="Chromosome"/>
</dbReference>
<dbReference type="GO" id="GO:0005737">
    <property type="term" value="C:cytoplasm"/>
    <property type="evidence" value="ECO:0007669"/>
    <property type="project" value="UniProtKB-SubCell"/>
</dbReference>
<dbReference type="GO" id="GO:0140096">
    <property type="term" value="F:catalytic activity, acting on a protein"/>
    <property type="evidence" value="ECO:0007669"/>
    <property type="project" value="UniProtKB-ARBA"/>
</dbReference>
<dbReference type="GO" id="GO:0004821">
    <property type="term" value="F:histidine-tRNA ligase activity"/>
    <property type="evidence" value="ECO:0007669"/>
    <property type="project" value="InterPro"/>
</dbReference>
<dbReference type="GO" id="GO:0016740">
    <property type="term" value="F:transferase activity"/>
    <property type="evidence" value="ECO:0007669"/>
    <property type="project" value="UniProtKB-ARBA"/>
</dbReference>
<dbReference type="GO" id="GO:0006427">
    <property type="term" value="P:histidyl-tRNA aminoacylation"/>
    <property type="evidence" value="ECO:0007669"/>
    <property type="project" value="InterPro"/>
</dbReference>
<dbReference type="GO" id="GO:0000105">
    <property type="term" value="P:L-histidine biosynthetic process"/>
    <property type="evidence" value="ECO:0007669"/>
    <property type="project" value="UniProtKB-UniRule"/>
</dbReference>
<dbReference type="CDD" id="cd00773">
    <property type="entry name" value="HisRS-like_core"/>
    <property type="match status" value="1"/>
</dbReference>
<dbReference type="Gene3D" id="3.40.50.12590">
    <property type="match status" value="1"/>
</dbReference>
<dbReference type="Gene3D" id="3.30.930.10">
    <property type="entry name" value="Bira Bifunctional Protein, Domain 2"/>
    <property type="match status" value="1"/>
</dbReference>
<dbReference type="HAMAP" id="MF_00125">
    <property type="entry name" value="HisZ"/>
    <property type="match status" value="1"/>
</dbReference>
<dbReference type="InterPro" id="IPR006195">
    <property type="entry name" value="aa-tRNA-synth_II"/>
</dbReference>
<dbReference type="InterPro" id="IPR045864">
    <property type="entry name" value="aa-tRNA-synth_II/BPL/LPL"/>
</dbReference>
<dbReference type="InterPro" id="IPR041715">
    <property type="entry name" value="HisRS-like_core"/>
</dbReference>
<dbReference type="InterPro" id="IPR004516">
    <property type="entry name" value="HisRS/HisZ"/>
</dbReference>
<dbReference type="InterPro" id="IPR004517">
    <property type="entry name" value="HisZ"/>
</dbReference>
<dbReference type="InterPro" id="IPR053846">
    <property type="entry name" value="HisZ-C"/>
</dbReference>
<dbReference type="NCBIfam" id="TIGR00443">
    <property type="entry name" value="hisZ_biosyn_reg"/>
    <property type="match status" value="1"/>
</dbReference>
<dbReference type="NCBIfam" id="NF008941">
    <property type="entry name" value="PRK12292.2-4"/>
    <property type="match status" value="1"/>
</dbReference>
<dbReference type="PANTHER" id="PTHR43707:SF1">
    <property type="entry name" value="HISTIDINE--TRNA LIGASE, MITOCHONDRIAL-RELATED"/>
    <property type="match status" value="1"/>
</dbReference>
<dbReference type="PANTHER" id="PTHR43707">
    <property type="entry name" value="HISTIDYL-TRNA SYNTHETASE"/>
    <property type="match status" value="1"/>
</dbReference>
<dbReference type="Pfam" id="PF21996">
    <property type="entry name" value="HisZ-like"/>
    <property type="match status" value="1"/>
</dbReference>
<dbReference type="Pfam" id="PF13393">
    <property type="entry name" value="tRNA-synt_His"/>
    <property type="match status" value="1"/>
</dbReference>
<dbReference type="PIRSF" id="PIRSF001549">
    <property type="entry name" value="His-tRNA_synth"/>
    <property type="match status" value="1"/>
</dbReference>
<dbReference type="SUPFAM" id="SSF55681">
    <property type="entry name" value="Class II aaRS and biotin synthetases"/>
    <property type="match status" value="1"/>
</dbReference>
<dbReference type="PROSITE" id="PS50862">
    <property type="entry name" value="AA_TRNA_LIGASE_II"/>
    <property type="match status" value="1"/>
</dbReference>
<gene>
    <name evidence="1" type="primary">hisZ</name>
    <name type="ordered locus">GTNG_3027</name>
</gene>
<accession>A4ISR8</accession>
<comment type="function">
    <text evidence="1">Required for the first step of histidine biosynthesis. May allow the feedback regulation of ATP phosphoribosyltransferase activity by histidine.</text>
</comment>
<comment type="pathway">
    <text evidence="1">Amino-acid biosynthesis; L-histidine biosynthesis; L-histidine from 5-phospho-alpha-D-ribose 1-diphosphate: step 1/9.</text>
</comment>
<comment type="subunit">
    <text evidence="1">Heteromultimer composed of HisG and HisZ subunits.</text>
</comment>
<comment type="subcellular location">
    <subcellularLocation>
        <location evidence="1">Cytoplasm</location>
    </subcellularLocation>
</comment>
<comment type="miscellaneous">
    <text>This function is generally fulfilled by the C-terminal part of HisG, which is missing in some bacteria such as this one.</text>
</comment>
<comment type="similarity">
    <text evidence="1">Belongs to the class-II aminoacyl-tRNA synthetase family. HisZ subfamily.</text>
</comment>
<keyword id="KW-0028">Amino-acid biosynthesis</keyword>
<keyword id="KW-0963">Cytoplasm</keyword>
<keyword id="KW-0368">Histidine biosynthesis</keyword>
<reference key="1">
    <citation type="journal article" date="2007" name="Proc. Natl. Acad. Sci. U.S.A.">
        <title>Genome and proteome of long-chain alkane degrading Geobacillus thermodenitrificans NG80-2 isolated from a deep-subsurface oil reservoir.</title>
        <authorList>
            <person name="Feng L."/>
            <person name="Wang W."/>
            <person name="Cheng J."/>
            <person name="Ren Y."/>
            <person name="Zhao G."/>
            <person name="Gao C."/>
            <person name="Tang Y."/>
            <person name="Liu X."/>
            <person name="Han W."/>
            <person name="Peng X."/>
            <person name="Liu R."/>
            <person name="Wang L."/>
        </authorList>
    </citation>
    <scope>NUCLEOTIDE SEQUENCE [LARGE SCALE GENOMIC DNA]</scope>
    <source>
        <strain>NG80-2</strain>
    </source>
</reference>
<feature type="chain" id="PRO_1000016262" description="ATP phosphoribosyltransferase regulatory subunit">
    <location>
        <begin position="1"/>
        <end position="394"/>
    </location>
</feature>